<dbReference type="EC" id="4.2.1.7"/>
<dbReference type="EMBL" id="D13328">
    <property type="protein sequence ID" value="BAA18901.1"/>
    <property type="molecule type" value="Genomic_DNA"/>
</dbReference>
<dbReference type="EMBL" id="U18997">
    <property type="protein sequence ID" value="AAA57893.1"/>
    <property type="molecule type" value="Genomic_DNA"/>
</dbReference>
<dbReference type="EMBL" id="U00096">
    <property type="protein sequence ID" value="AAC76126.1"/>
    <property type="molecule type" value="Genomic_DNA"/>
</dbReference>
<dbReference type="EMBL" id="AP009048">
    <property type="protein sequence ID" value="BAE77141.1"/>
    <property type="molecule type" value="Genomic_DNA"/>
</dbReference>
<dbReference type="PIR" id="H65097">
    <property type="entry name" value="H65097"/>
</dbReference>
<dbReference type="RefSeq" id="NP_417562.1">
    <property type="nucleotide sequence ID" value="NC_000913.3"/>
</dbReference>
<dbReference type="RefSeq" id="WP_001199390.1">
    <property type="nucleotide sequence ID" value="NZ_LN832404.1"/>
</dbReference>
<dbReference type="SMR" id="P42604"/>
<dbReference type="BioGRID" id="4262407">
    <property type="interactions" value="18"/>
</dbReference>
<dbReference type="DIP" id="DIP-11105N"/>
<dbReference type="FunCoup" id="P42604">
    <property type="interactions" value="231"/>
</dbReference>
<dbReference type="IntAct" id="P42604">
    <property type="interactions" value="6"/>
</dbReference>
<dbReference type="STRING" id="511145.b3091"/>
<dbReference type="jPOST" id="P42604"/>
<dbReference type="PaxDb" id="511145-b3091"/>
<dbReference type="EnsemblBacteria" id="AAC76126">
    <property type="protein sequence ID" value="AAC76126"/>
    <property type="gene ID" value="b3091"/>
</dbReference>
<dbReference type="GeneID" id="75205102"/>
<dbReference type="GeneID" id="947603"/>
<dbReference type="KEGG" id="ecj:JW3062"/>
<dbReference type="KEGG" id="eco:b3091"/>
<dbReference type="KEGG" id="ecoc:C3026_16880"/>
<dbReference type="PATRIC" id="fig|1411691.4.peg.3638"/>
<dbReference type="EchoBASE" id="EB2592"/>
<dbReference type="eggNOG" id="COG2721">
    <property type="taxonomic scope" value="Bacteria"/>
</dbReference>
<dbReference type="HOGENOM" id="CLU_029189_0_0_6"/>
<dbReference type="InParanoid" id="P42604"/>
<dbReference type="OMA" id="LGCERNQ"/>
<dbReference type="OrthoDB" id="9804574at2"/>
<dbReference type="PhylomeDB" id="P42604"/>
<dbReference type="BioCyc" id="EcoCyc:ALTRODEHYDRAT-MONOMER"/>
<dbReference type="BioCyc" id="MetaCyc:ALTRODEHYDRAT-MONOMER"/>
<dbReference type="UniPathway" id="UPA00246"/>
<dbReference type="PRO" id="PR:P42604"/>
<dbReference type="Proteomes" id="UP000000625">
    <property type="component" value="Chromosome"/>
</dbReference>
<dbReference type="GO" id="GO:0008789">
    <property type="term" value="F:altronate dehydratase activity"/>
    <property type="evidence" value="ECO:0007669"/>
    <property type="project" value="UniProtKB-EC"/>
</dbReference>
<dbReference type="GO" id="GO:0008198">
    <property type="term" value="F:ferrous iron binding"/>
    <property type="evidence" value="ECO:0000314"/>
    <property type="project" value="EcoCyc"/>
</dbReference>
<dbReference type="GO" id="GO:0019698">
    <property type="term" value="P:D-galacturonate catabolic process"/>
    <property type="evidence" value="ECO:0000315"/>
    <property type="project" value="EcoCyc"/>
</dbReference>
<dbReference type="CDD" id="cd11613">
    <property type="entry name" value="SAF_AH_GD"/>
    <property type="match status" value="1"/>
</dbReference>
<dbReference type="FunFam" id="2.30.130.110:FF:000002">
    <property type="entry name" value="Altronate hydrolase"/>
    <property type="match status" value="1"/>
</dbReference>
<dbReference type="Gene3D" id="2.30.130.110">
    <property type="match status" value="1"/>
</dbReference>
<dbReference type="InterPro" id="IPR048332">
    <property type="entry name" value="GD_AH_C"/>
</dbReference>
<dbReference type="InterPro" id="IPR007392">
    <property type="entry name" value="GD_AH_second"/>
</dbReference>
<dbReference type="InterPro" id="IPR013974">
    <property type="entry name" value="SAF"/>
</dbReference>
<dbReference type="InterPro" id="IPR044144">
    <property type="entry name" value="UxaA/GarD_SAF"/>
</dbReference>
<dbReference type="InterPro" id="IPR052172">
    <property type="entry name" value="UxaA_altronate/galactarate_dh"/>
</dbReference>
<dbReference type="PANTHER" id="PTHR30536:SF5">
    <property type="entry name" value="ALTRONATE DEHYDRATASE"/>
    <property type="match status" value="1"/>
</dbReference>
<dbReference type="PANTHER" id="PTHR30536">
    <property type="entry name" value="ALTRONATE/GALACTARATE DEHYDRATASE"/>
    <property type="match status" value="1"/>
</dbReference>
<dbReference type="Pfam" id="PF20629">
    <property type="entry name" value="GD_AH_C"/>
    <property type="match status" value="1"/>
</dbReference>
<dbReference type="Pfam" id="PF04295">
    <property type="entry name" value="GD_AH_second"/>
    <property type="match status" value="1"/>
</dbReference>
<dbReference type="Pfam" id="PF08666">
    <property type="entry name" value="SAF"/>
    <property type="match status" value="1"/>
</dbReference>
<dbReference type="SMART" id="SM00858">
    <property type="entry name" value="SAF"/>
    <property type="match status" value="1"/>
</dbReference>
<feature type="chain" id="PRO_0000172283" description="Altronate dehydratase">
    <location>
        <begin position="1"/>
        <end position="495"/>
    </location>
</feature>
<protein>
    <recommendedName>
        <fullName>Altronate dehydratase</fullName>
        <ecNumber>4.2.1.7</ecNumber>
    </recommendedName>
    <alternativeName>
        <fullName>D-altronate hydro-lyase</fullName>
    </alternativeName>
</protein>
<accession>P42604</accession>
<accession>Q2M9B5</accession>
<proteinExistence type="evidence at protein level"/>
<evidence type="ECO:0000269" key="1">
    <source>
    </source>
</evidence>
<evidence type="ECO:0000269" key="2">
    <source>
    </source>
</evidence>
<evidence type="ECO:0000305" key="3"/>
<sequence length="495" mass="54093">MQYIKIHALDNVAVALADLAEGTEVSVDNQTVTLRQDVARGHKFALTDIAKGANVIKYGLPIGYALADIAAGVHVHAHNTRTNLSDLDQYRYQPDFQDLPAQAADREVQIYRRANGDVGVRNELWILPTVGCVNGIARQIQNRFLKETNNAEGTDGVFLFSHTYGCSQLGDDHINTRTMLQNMVRHPNAGAVLVIGLGCENNQVAAFRETLGDIDPERVHFMICQQQDDEIEAGIEHLHQLYNVMRNDKREPGKLSELKFGLECGGSDGLSGITANPMLGRFSDYVIANGGTTVLTEVPEMFGAEQLLMDHCRDEATFEKLVTMVNDFKQYFIAHDQPIYENPSPGNKAGGITTLEDKSLGCTQKAGSSVVVDVLRYGERLKTPGLNLLSAPGNDAVATSALAGAGCHMVLFSTGRGTPYGGFVPTVKIATNSELAAKKKHWIDFDAGQLIHGKAMPQLLEEFIDTIVEFANGKQTCNERNDFRELAIFKSGVTL</sequence>
<keyword id="KW-0408">Iron</keyword>
<keyword id="KW-0456">Lyase</keyword>
<keyword id="KW-0464">Manganese</keyword>
<keyword id="KW-1185">Reference proteome</keyword>
<comment type="function">
    <text evidence="2">Catalyzes the dehydration of D-altronate.</text>
</comment>
<comment type="catalytic activity">
    <reaction evidence="2">
        <text>D-altronate = 2-dehydro-3-deoxy-D-gluconate + H2O</text>
        <dbReference type="Rhea" id="RHEA:15957"/>
        <dbReference type="ChEBI" id="CHEBI:15377"/>
        <dbReference type="ChEBI" id="CHEBI:17360"/>
        <dbReference type="ChEBI" id="CHEBI:57990"/>
        <dbReference type="EC" id="4.2.1.7"/>
    </reaction>
</comment>
<comment type="cofactor">
    <cofactor evidence="2">
        <name>Fe(2+)</name>
        <dbReference type="ChEBI" id="CHEBI:29033"/>
    </cofactor>
    <cofactor evidence="2">
        <name>Mn(2+)</name>
        <dbReference type="ChEBI" id="CHEBI:29035"/>
    </cofactor>
    <text evidence="2">Mn(2+) can substitute for iron, but in higher concentrations. Cannot use Fe(3+), Ni(2+) or Mg(2+).</text>
</comment>
<comment type="activity regulation">
    <text evidence="2">Is inhibited by high concentrations of Fe(2+) (&gt; 2 mM), and by EDTA or other iron chelators in vitro.</text>
</comment>
<comment type="biophysicochemical properties">
    <phDependence>
        <text evidence="2">Optimum pH is about 7.5. The activity at pH 6.5 and 8.6 is only about 20% of the maximal achievable activity at optimum pH.</text>
    </phDependence>
</comment>
<comment type="pathway">
    <text>Carbohydrate metabolism; pentose and glucuronate interconversion.</text>
</comment>
<comment type="induction">
    <text evidence="1">Repressed by LeuO and H-NS. Part of the uxaCA operon.</text>
</comment>
<comment type="similarity">
    <text evidence="3">Belongs to the UxaA family.</text>
</comment>
<reference key="1">
    <citation type="submission" date="1996-01" db="EMBL/GenBank/DDBJ databases">
        <authorList>
            <person name="Mizobuchi K."/>
        </authorList>
    </citation>
    <scope>NUCLEOTIDE SEQUENCE [GENOMIC DNA]</scope>
    <source>
        <strain>K12 / W3110 / ATCC 27325 / DSM 5911</strain>
    </source>
</reference>
<reference key="2">
    <citation type="journal article" date="1997" name="Science">
        <title>The complete genome sequence of Escherichia coli K-12.</title>
        <authorList>
            <person name="Blattner F.R."/>
            <person name="Plunkett G. III"/>
            <person name="Bloch C.A."/>
            <person name="Perna N.T."/>
            <person name="Burland V."/>
            <person name="Riley M."/>
            <person name="Collado-Vides J."/>
            <person name="Glasner J.D."/>
            <person name="Rode C.K."/>
            <person name="Mayhew G.F."/>
            <person name="Gregor J."/>
            <person name="Davis N.W."/>
            <person name="Kirkpatrick H.A."/>
            <person name="Goeden M.A."/>
            <person name="Rose D.J."/>
            <person name="Mau B."/>
            <person name="Shao Y."/>
        </authorList>
    </citation>
    <scope>NUCLEOTIDE SEQUENCE [LARGE SCALE GENOMIC DNA]</scope>
    <source>
        <strain>K12 / MG1655 / ATCC 47076</strain>
    </source>
</reference>
<reference key="3">
    <citation type="journal article" date="2006" name="Mol. Syst. Biol.">
        <title>Highly accurate genome sequences of Escherichia coli K-12 strains MG1655 and W3110.</title>
        <authorList>
            <person name="Hayashi K."/>
            <person name="Morooka N."/>
            <person name="Yamamoto Y."/>
            <person name="Fujita K."/>
            <person name="Isono K."/>
            <person name="Choi S."/>
            <person name="Ohtsubo E."/>
            <person name="Baba T."/>
            <person name="Wanner B.L."/>
            <person name="Mori H."/>
            <person name="Horiuchi T."/>
        </authorList>
    </citation>
    <scope>NUCLEOTIDE SEQUENCE [LARGE SCALE GENOMIC DNA]</scope>
    <source>
        <strain>K12 / W3110 / ATCC 27325 / DSM 5911</strain>
    </source>
</reference>
<reference key="4">
    <citation type="journal article" date="1987" name="Eur. J. Biochem.">
        <title>The role of iron in the activation of mannonic and altronic acid hydratases, two Fe-requiring hydro-lyases.</title>
        <authorList>
            <person name="Dreyer J.L."/>
        </authorList>
    </citation>
    <scope>FUNCTION</scope>
    <scope>CATALYTIC ACTIVITY</scope>
    <scope>COFACTOR</scope>
    <scope>PH DEPENDENCE</scope>
    <scope>ACTIVITY REGULATION</scope>
    <source>
        <strain>K12</strain>
    </source>
</reference>
<reference key="5">
    <citation type="journal article" date="2009" name="J. Bacteriol.">
        <title>Involvement of the leucine response transcription factor LeuO in regulation of the genes for sulfa drug efflux.</title>
        <authorList>
            <person name="Shimada T."/>
            <person name="Yamamoto K."/>
            <person name="Ishihama A."/>
        </authorList>
    </citation>
    <scope>OPERON STRUCTURE</scope>
    <scope>INDUCTION</scope>
    <source>
        <strain>K12 / BW25113</strain>
    </source>
</reference>
<organism>
    <name type="scientific">Escherichia coli (strain K12)</name>
    <dbReference type="NCBI Taxonomy" id="83333"/>
    <lineage>
        <taxon>Bacteria</taxon>
        <taxon>Pseudomonadati</taxon>
        <taxon>Pseudomonadota</taxon>
        <taxon>Gammaproteobacteria</taxon>
        <taxon>Enterobacterales</taxon>
        <taxon>Enterobacteriaceae</taxon>
        <taxon>Escherichia</taxon>
    </lineage>
</organism>
<name>UXAA_ECOLI</name>
<gene>
    <name type="primary">uxaA</name>
    <name type="synonym">ygjW</name>
    <name type="ordered locus">b3091</name>
    <name type="ordered locus">JW3062</name>
</gene>